<protein>
    <recommendedName>
        <fullName evidence="6">Decarboxylase CPUR_05434</fullName>
        <ecNumber evidence="8">4.1.1.-</ecNumber>
    </recommendedName>
    <alternativeName>
        <fullName evidence="6">Ergochrome gene cluster protein CPUR_05434</fullName>
    </alternativeName>
</protein>
<gene>
    <name type="ORF">CPUR_05434</name>
</gene>
<dbReference type="EC" id="4.1.1.-" evidence="8"/>
<dbReference type="EMBL" id="CAGA01000032">
    <property type="protein sequence ID" value="CCE31581.1"/>
    <property type="molecule type" value="Genomic_DNA"/>
</dbReference>
<dbReference type="SMR" id="M1W271"/>
<dbReference type="STRING" id="1111077.M1W271"/>
<dbReference type="VEuPathDB" id="FungiDB:CPUR_05434"/>
<dbReference type="eggNOG" id="ENOG502SJ0E">
    <property type="taxonomic scope" value="Eukaryota"/>
</dbReference>
<dbReference type="HOGENOM" id="CLU_115019_0_0_1"/>
<dbReference type="OrthoDB" id="3454835at2759"/>
<dbReference type="Proteomes" id="UP000016801">
    <property type="component" value="Unassembled WGS sequence"/>
</dbReference>
<dbReference type="GO" id="GO:0016829">
    <property type="term" value="F:lyase activity"/>
    <property type="evidence" value="ECO:0007669"/>
    <property type="project" value="UniProtKB-KW"/>
</dbReference>
<dbReference type="GO" id="GO:0016491">
    <property type="term" value="F:oxidoreductase activity"/>
    <property type="evidence" value="ECO:0007669"/>
    <property type="project" value="InterPro"/>
</dbReference>
<dbReference type="Gene3D" id="3.30.70.100">
    <property type="match status" value="1"/>
</dbReference>
<dbReference type="InterPro" id="IPR011008">
    <property type="entry name" value="Dimeric_a/b-barrel"/>
</dbReference>
<dbReference type="InterPro" id="IPR009799">
    <property type="entry name" value="EthD_dom"/>
</dbReference>
<dbReference type="Pfam" id="PF07110">
    <property type="entry name" value="EthD"/>
    <property type="match status" value="1"/>
</dbReference>
<dbReference type="SUPFAM" id="SSF54909">
    <property type="entry name" value="Dimeric alpha+beta barrel"/>
    <property type="match status" value="1"/>
</dbReference>
<proteinExistence type="evidence at transcript level"/>
<name>PIG12_CLAP2</name>
<feature type="chain" id="PRO_0000443978" description="Decarboxylase CPUR_05434">
    <location>
        <begin position="1"/>
        <end position="141"/>
    </location>
</feature>
<feature type="domain" description="EthD" evidence="3">
    <location>
        <begin position="26"/>
        <end position="121"/>
    </location>
</feature>
<comment type="function">
    <text evidence="1 2 4 5">Decarboxylase; part of the ergochrome gene cluster responsible for the typical purple-black color of the ergot sclerotia (PubMed:28955461). The ergochrome gene cluster produces several ergot pigments including the yellow ergochrome secalonic acid and its derivatives, as well as the red anthraquinones endocrocin and clavorubin (PubMed:28955461). The pathway begins with the synthesis of atrochrysone thioester by the polyketide synthase (PKS) CPUR_05437 (By similarity). The atrochrysone carboxyl ACP thioesterase CPUR_05436 then breaks the thioester bond and releases the atrochrysone carboxylic acid from CPUR_05437 (By similarity). The decarboxylase CPUR_05434 then catalyzes the concerted decarboxylation-elimination required to convert atochrysone carboxylic acid into emodin anthrone, which is further oxidized to emodin by the anthrone oxygenase CPUR_05435 (By similarity). Emodin is further modified to yield monodictyphenone via several steps involving CPUR_05427, CPUR_05428, CPUR_05429 and CPUR_05430 (By similarity). The short chain dehydrogenase/reductase CPUR_05418 then catalyzes the C-5 ketoreduction to give the xanthone skeleton of the monomeric units (PubMed:32105084). Ergochromes formation requires further dimerization steps of different xanthone units, probably catalyzed by the cytochrome P450 monooxygenase CPUR_05419 (PubMed:28955461). CPUR_05425, CPUR_05426 and CPUR_05431 are unique to Claviceps, thus it is likely that they are involved in further modification of xanthone units or in their dimerization (PubMed:28955461). The yellow ergochromes and the red anthraquinone pigments endocrocin and clavorubin are products from the same PKS derived precursors and the latter are likely shunt products in the pathway of xanthone biosynthesis (PubMed:28955461). It is proposed that atrochrysone carboxylic acid released from the PKS CPUR_05437 can also be converted to endocrocin anthrone which is further oxidized into endocrocin by CPUR_05435 (By similarity). Endocrocin could be then modified to clavorubin, possibly by CPUR_05423 and CPUR_05431 (PubMed:28955461). Clavorubin is the principal anthraquinone metabolite produced by the cluster with a much higher yield compared to endocrocin (PubMed:28955461).</text>
</comment>
<comment type="catalytic activity">
    <reaction evidence="8">
        <text>atrochrysone carboxylate + H(+) = atrochrysone + CO2</text>
        <dbReference type="Rhea" id="RHEA:64264"/>
        <dbReference type="ChEBI" id="CHEBI:15378"/>
        <dbReference type="ChEBI" id="CHEBI:16526"/>
        <dbReference type="ChEBI" id="CHEBI:149713"/>
        <dbReference type="ChEBI" id="CHEBI:150016"/>
    </reaction>
    <physiologicalReaction direction="left-to-right" evidence="8">
        <dbReference type="Rhea" id="RHEA:64265"/>
    </physiologicalReaction>
</comment>
<comment type="induction">
    <text evidence="4">Expression correlates with the formation of the sclerotia and thus the pigment production and is directly regulated by the cluster-specific activator CPUR_05433 (PubMed:28955461).</text>
</comment>
<comment type="similarity">
    <text evidence="7">Belongs to the tpcK family.</text>
</comment>
<sequence length="141" mass="16769">MKMGMAKHSPRNKEYLCLTICGYRKEGMSEEAYRNHMVNVSAPMTKDLMVKYGIRRWTQIHNQNATRALMAELFDPQMCRLADFDCFSQVVFDNIEDYKRMKQDPWYKKHLMHDHEMFADTKRSMMTIGWIKEFVVDGKAV</sequence>
<reference key="1">
    <citation type="journal article" date="2013" name="PLoS Genet.">
        <title>Plant-symbiotic fungi as chemical engineers: Multi-genome analysis of the Clavicipitaceae reveals dynamics of alkaloid loci.</title>
        <authorList>
            <person name="Schardl C.L."/>
            <person name="Young C.A."/>
            <person name="Hesse U."/>
            <person name="Amyotte S.G."/>
            <person name="Andreeva K."/>
            <person name="Calie P.J."/>
            <person name="Fleetwood D.J."/>
            <person name="Haws D.C."/>
            <person name="Moore N."/>
            <person name="Oeser B."/>
            <person name="Panaccione D.G."/>
            <person name="Schweri K.K."/>
            <person name="Voisey C.R."/>
            <person name="Farman M.L."/>
            <person name="Jaromczyk J.W."/>
            <person name="Roe B.A."/>
            <person name="O'Sullivan D.M."/>
            <person name="Scott B."/>
            <person name="Tudzynski P."/>
            <person name="An Z."/>
            <person name="Arnaoudova E.G."/>
            <person name="Bullock C.T."/>
            <person name="Charlton N.D."/>
            <person name="Chen L."/>
            <person name="Cox M."/>
            <person name="Dinkins R.D."/>
            <person name="Florea S."/>
            <person name="Glenn A.E."/>
            <person name="Gordon A."/>
            <person name="Gueldener U."/>
            <person name="Harris D.R."/>
            <person name="Hollin W."/>
            <person name="Jaromczyk J."/>
            <person name="Johnson R.D."/>
            <person name="Khan A.K."/>
            <person name="Leistner E."/>
            <person name="Leuchtmann A."/>
            <person name="Li C."/>
            <person name="Liu J."/>
            <person name="Liu J."/>
            <person name="Liu M."/>
            <person name="Mace W."/>
            <person name="Machado C."/>
            <person name="Nagabhyru P."/>
            <person name="Pan J."/>
            <person name="Schmid J."/>
            <person name="Sugawara K."/>
            <person name="Steiner U."/>
            <person name="Takach J.E."/>
            <person name="Tanaka E."/>
            <person name="Webb J.S."/>
            <person name="Wilson E.V."/>
            <person name="Wiseman J.L."/>
            <person name="Yoshida R."/>
            <person name="Zeng Z."/>
        </authorList>
    </citation>
    <scope>NUCLEOTIDE SEQUENCE [LARGE SCALE GENOMIC DNA]</scope>
    <source>
        <strain>20.1</strain>
    </source>
</reference>
<reference key="2">
    <citation type="journal article" date="2016" name="Fungal Biol. Biotechnol.">
        <title>Identification and characterization of the ergochrome gene cluster in the plant pathogenic fungus Claviceps purpurea.</title>
        <authorList>
            <person name="Neubauer L."/>
            <person name="Dopstadt J."/>
            <person name="Humpf H.U."/>
            <person name="Tudzynski P."/>
        </authorList>
    </citation>
    <scope>FUNCTION</scope>
    <scope>INDUCTION</scope>
</reference>
<reference key="3">
    <citation type="journal article" date="2020" name="Org. Lett.">
        <title>Unraveling the fungal strategy for tetrahydroxanthone biosynthesis and diversification.</title>
        <authorList>
            <person name="Wei X."/>
            <person name="Matsuda Y."/>
        </authorList>
    </citation>
    <scope>FUNCTION</scope>
</reference>
<evidence type="ECO:0000250" key="1">
    <source>
        <dbReference type="UniProtKB" id="Q4W944"/>
    </source>
</evidence>
<evidence type="ECO:0000250" key="2">
    <source>
        <dbReference type="UniProtKB" id="Q5BH30"/>
    </source>
</evidence>
<evidence type="ECO:0000255" key="3"/>
<evidence type="ECO:0000269" key="4">
    <source>
    </source>
</evidence>
<evidence type="ECO:0000269" key="5">
    <source>
    </source>
</evidence>
<evidence type="ECO:0000303" key="6">
    <source>
    </source>
</evidence>
<evidence type="ECO:0000305" key="7"/>
<evidence type="ECO:0000305" key="8">
    <source>
    </source>
</evidence>
<keyword id="KW-0456">Lyase</keyword>
<keyword id="KW-1185">Reference proteome</keyword>
<accession>M1W271</accession>
<organism>
    <name type="scientific">Claviceps purpurea (strain 20.1)</name>
    <name type="common">Ergot fungus</name>
    <name type="synonym">Sphacelia segetum</name>
    <dbReference type="NCBI Taxonomy" id="1111077"/>
    <lineage>
        <taxon>Eukaryota</taxon>
        <taxon>Fungi</taxon>
        <taxon>Dikarya</taxon>
        <taxon>Ascomycota</taxon>
        <taxon>Pezizomycotina</taxon>
        <taxon>Sordariomycetes</taxon>
        <taxon>Hypocreomycetidae</taxon>
        <taxon>Hypocreales</taxon>
        <taxon>Clavicipitaceae</taxon>
        <taxon>Claviceps</taxon>
    </lineage>
</organism>